<gene>
    <name type="primary">rps7</name>
</gene>
<accession>Q67IB0</accession>
<comment type="function">
    <text evidence="1">One of the primary rRNA binding proteins, it binds directly to 16S rRNA where it nucleates assembly of the head domain of the 30S subunit.</text>
</comment>
<comment type="subunit">
    <text>Part of the 30S ribosomal subunit.</text>
</comment>
<comment type="subcellular location">
    <subcellularLocation>
        <location>Plastid</location>
        <location>Chloroplast</location>
    </subcellularLocation>
</comment>
<comment type="similarity">
    <text evidence="2">Belongs to the universal ribosomal protein uS7 family.</text>
</comment>
<keyword id="KW-0150">Chloroplast</keyword>
<keyword id="KW-0934">Plastid</keyword>
<keyword id="KW-0687">Ribonucleoprotein</keyword>
<keyword id="KW-0689">Ribosomal protein</keyword>
<keyword id="KW-0694">RNA-binding</keyword>
<keyword id="KW-0699">rRNA-binding</keyword>
<evidence type="ECO:0000250" key="1"/>
<evidence type="ECO:0000305" key="2"/>
<organism>
    <name type="scientific">Muscari comosum</name>
    <name type="common">Tassel grape hyacinth</name>
    <name type="synonym">Leopoldia comosa</name>
    <dbReference type="NCBI Taxonomy" id="81770"/>
    <lineage>
        <taxon>Eukaryota</taxon>
        <taxon>Viridiplantae</taxon>
        <taxon>Streptophyta</taxon>
        <taxon>Embryophyta</taxon>
        <taxon>Tracheophyta</taxon>
        <taxon>Spermatophyta</taxon>
        <taxon>Magnoliopsida</taxon>
        <taxon>Liliopsida</taxon>
        <taxon>Asparagales</taxon>
        <taxon>Hyacinthaceae</taxon>
        <taxon>Hyacinthoideae</taxon>
        <taxon>Hyacintheae</taxon>
        <taxon>Muscari</taxon>
    </lineage>
</organism>
<proteinExistence type="inferred from homology"/>
<feature type="chain" id="PRO_0000124476" description="Small ribosomal subunit protein uS7c">
    <location>
        <begin position="1"/>
        <end position="155"/>
    </location>
</feature>
<protein>
    <recommendedName>
        <fullName evidence="2">Small ribosomal subunit protein uS7c</fullName>
    </recommendedName>
    <alternativeName>
        <fullName>30S ribosomal protein S7, chloroplastic</fullName>
    </alternativeName>
</protein>
<reference key="1">
    <citation type="submission" date="2002-09" db="EMBL/GenBank/DDBJ databases">
        <title>Phylogenetic relationships among the major lineages of Asparagales based on a large chloroplast data set.</title>
        <authorList>
            <person name="McPherson M.A."/>
            <person name="Rai H.S."/>
            <person name="Wong W.A."/>
            <person name="Graham S.W."/>
        </authorList>
    </citation>
    <scope>NUCLEOTIDE SEQUENCE [GENOMIC DNA]</scope>
</reference>
<sequence length="155" mass="17343">MSRRGTAEEKTAKSDPIYRNRLVNMLVNRILKHGKKSLAYQIIYRAVKKIQQKTETNPLSVLRQAIRGVTPDIAVKARRVGGSTHQVPIEIGSTQGKALAIRWLLGASRKRPGRNMAFKLSSELVDAAKGSGDAIRKKEETHRMAEANRAFAHFR</sequence>
<geneLocation type="chloroplast"/>
<dbReference type="EMBL" id="AY147496">
    <property type="protein sequence ID" value="AAN32093.1"/>
    <property type="molecule type" value="Genomic_DNA"/>
</dbReference>
<dbReference type="SMR" id="Q67IB0"/>
<dbReference type="GO" id="GO:0009507">
    <property type="term" value="C:chloroplast"/>
    <property type="evidence" value="ECO:0007669"/>
    <property type="project" value="UniProtKB-SubCell"/>
</dbReference>
<dbReference type="GO" id="GO:0015935">
    <property type="term" value="C:small ribosomal subunit"/>
    <property type="evidence" value="ECO:0007669"/>
    <property type="project" value="InterPro"/>
</dbReference>
<dbReference type="GO" id="GO:0019843">
    <property type="term" value="F:rRNA binding"/>
    <property type="evidence" value="ECO:0007669"/>
    <property type="project" value="UniProtKB-UniRule"/>
</dbReference>
<dbReference type="GO" id="GO:0003735">
    <property type="term" value="F:structural constituent of ribosome"/>
    <property type="evidence" value="ECO:0007669"/>
    <property type="project" value="InterPro"/>
</dbReference>
<dbReference type="GO" id="GO:0006412">
    <property type="term" value="P:translation"/>
    <property type="evidence" value="ECO:0007669"/>
    <property type="project" value="UniProtKB-UniRule"/>
</dbReference>
<dbReference type="CDD" id="cd14871">
    <property type="entry name" value="uS7_Chloroplast"/>
    <property type="match status" value="1"/>
</dbReference>
<dbReference type="FunFam" id="1.10.455.10:FF:000001">
    <property type="entry name" value="30S ribosomal protein S7"/>
    <property type="match status" value="1"/>
</dbReference>
<dbReference type="Gene3D" id="1.10.455.10">
    <property type="entry name" value="Ribosomal protein S7 domain"/>
    <property type="match status" value="1"/>
</dbReference>
<dbReference type="HAMAP" id="MF_00480_B">
    <property type="entry name" value="Ribosomal_uS7_B"/>
    <property type="match status" value="1"/>
</dbReference>
<dbReference type="InterPro" id="IPR000235">
    <property type="entry name" value="Ribosomal_uS7"/>
</dbReference>
<dbReference type="InterPro" id="IPR005717">
    <property type="entry name" value="Ribosomal_uS7_bac/org-type"/>
</dbReference>
<dbReference type="InterPro" id="IPR020606">
    <property type="entry name" value="Ribosomal_uS7_CS"/>
</dbReference>
<dbReference type="InterPro" id="IPR023798">
    <property type="entry name" value="Ribosomal_uS7_dom"/>
</dbReference>
<dbReference type="InterPro" id="IPR036823">
    <property type="entry name" value="Ribosomal_uS7_dom_sf"/>
</dbReference>
<dbReference type="NCBIfam" id="TIGR01029">
    <property type="entry name" value="rpsG_bact"/>
    <property type="match status" value="1"/>
</dbReference>
<dbReference type="PANTHER" id="PTHR11205">
    <property type="entry name" value="RIBOSOMAL PROTEIN S7"/>
    <property type="match status" value="1"/>
</dbReference>
<dbReference type="Pfam" id="PF00177">
    <property type="entry name" value="Ribosomal_S7"/>
    <property type="match status" value="1"/>
</dbReference>
<dbReference type="PIRSF" id="PIRSF002122">
    <property type="entry name" value="RPS7p_RPS7a_RPS5e_RPS7o"/>
    <property type="match status" value="1"/>
</dbReference>
<dbReference type="SUPFAM" id="SSF47973">
    <property type="entry name" value="Ribosomal protein S7"/>
    <property type="match status" value="1"/>
</dbReference>
<dbReference type="PROSITE" id="PS00052">
    <property type="entry name" value="RIBOSOMAL_S7"/>
    <property type="match status" value="1"/>
</dbReference>
<name>RR7_MUSCM</name>